<keyword id="KW-0030">Aminoacyl-tRNA synthetase</keyword>
<keyword id="KW-0067">ATP-binding</keyword>
<keyword id="KW-0963">Cytoplasm</keyword>
<keyword id="KW-0436">Ligase</keyword>
<keyword id="KW-0460">Magnesium</keyword>
<keyword id="KW-0479">Metal-binding</keyword>
<keyword id="KW-0547">Nucleotide-binding</keyword>
<keyword id="KW-0648">Protein biosynthesis</keyword>
<keyword id="KW-1185">Reference proteome</keyword>
<keyword id="KW-0694">RNA-binding</keyword>
<keyword id="KW-0820">tRNA-binding</keyword>
<accession>Q8D3B5</accession>
<organism>
    <name type="scientific">Wigglesworthia glossinidia brevipalpis</name>
    <dbReference type="NCBI Taxonomy" id="36870"/>
    <lineage>
        <taxon>Bacteria</taxon>
        <taxon>Pseudomonadati</taxon>
        <taxon>Pseudomonadota</taxon>
        <taxon>Gammaproteobacteria</taxon>
        <taxon>Enterobacterales</taxon>
        <taxon>Erwiniaceae</taxon>
        <taxon>Wigglesworthia</taxon>
    </lineage>
</organism>
<gene>
    <name evidence="1" type="primary">pheT</name>
    <name type="ordered locus">WIGBR0860</name>
</gene>
<evidence type="ECO:0000255" key="1">
    <source>
        <dbReference type="HAMAP-Rule" id="MF_00283"/>
    </source>
</evidence>
<evidence type="ECO:0000305" key="2"/>
<name>SYFB_WIGBR</name>
<feature type="chain" id="PRO_0000126986" description="Phenylalanine--tRNA ligase beta subunit">
    <location>
        <begin position="1"/>
        <end position="803"/>
    </location>
</feature>
<feature type="domain" description="tRNA-binding" evidence="1">
    <location>
        <begin position="39"/>
        <end position="151"/>
    </location>
</feature>
<feature type="domain" description="B5" evidence="1">
    <location>
        <begin position="406"/>
        <end position="482"/>
    </location>
</feature>
<feature type="domain" description="FDX-ACB" evidence="1">
    <location>
        <begin position="707"/>
        <end position="800"/>
    </location>
</feature>
<feature type="binding site" evidence="1">
    <location>
        <position position="466"/>
    </location>
    <ligand>
        <name>Mg(2+)</name>
        <dbReference type="ChEBI" id="CHEBI:18420"/>
        <note>shared with alpha subunit</note>
    </ligand>
</feature>
<feature type="binding site" evidence="1">
    <location>
        <position position="470"/>
    </location>
    <ligand>
        <name>Mg(2+)</name>
        <dbReference type="ChEBI" id="CHEBI:18420"/>
        <note>shared with alpha subunit</note>
    </ligand>
</feature>
<sequence>MNLSEIWLREYLSINLDLNEIINRITKIGLEVEKIIPVSMKFSGIKIGKVISCKQHPKCKKLKIFLIKINNKNIINVISDYDKSLINKKIAVAVNGSILPNRTIVEKKFLYGYESCGIFCTYDQLKIFGLKETSKDIIVLDKNAIIGEDIKNYFFLNDNIICIKVSHNRCDCLNIIGLSRAISSEYNELLENKLINKINSTKDYGFKIKINEPEACPKYLTRKIKYINLNVNTPIWISERIRRSGFKPKNIIIDIINYVFIETGQTIKIFDADKISGNITVRFSKEKESMMISKNKKIIIQKNTLVVSDKNSIIEIAGILLGYSARIDSKTTINIIISSVLYRSKFLFGNSVKYCINSDLAYRNERNMIDPNIQHLAINRATELILRFCCGSPGKIINYINNKFLPKKILIKLYKKKLYEILGFFISKKLIENILLLLGYKYEFIKNYWKVSVPSWRMCNVKIEEDLISDISRFYGFEKIPIDLSYKKIKYNNCKYNINTLNNAKKLLTNRGYQEIISYTFVDKNIQNIIHPNKIPVPIINPISTEMSVLRLSFFTNFIQTILYNQNRQTKYIKIFESGFCFSKNKKYKLGIKQSFFISGAVSGFKNVESWYSKQREIDFFDIKGDVETLLYLNGNSSDFEFKTCKNKEFHPGKNSKIFFKKKYVGIIGEINPNIQNKLDIKNRIFVFELLWDNIKNFYVPKIYNISDIPFNYRDISIVISNKIPIIEVIKICKDSIKKELININIFDIYQGKEIKKGHKSISIRLTLQNKNYNMTNLEINSILEKCICNLKKNFLIEIRTIC</sequence>
<comment type="catalytic activity">
    <reaction evidence="1">
        <text>tRNA(Phe) + L-phenylalanine + ATP = L-phenylalanyl-tRNA(Phe) + AMP + diphosphate + H(+)</text>
        <dbReference type="Rhea" id="RHEA:19413"/>
        <dbReference type="Rhea" id="RHEA-COMP:9668"/>
        <dbReference type="Rhea" id="RHEA-COMP:9699"/>
        <dbReference type="ChEBI" id="CHEBI:15378"/>
        <dbReference type="ChEBI" id="CHEBI:30616"/>
        <dbReference type="ChEBI" id="CHEBI:33019"/>
        <dbReference type="ChEBI" id="CHEBI:58095"/>
        <dbReference type="ChEBI" id="CHEBI:78442"/>
        <dbReference type="ChEBI" id="CHEBI:78531"/>
        <dbReference type="ChEBI" id="CHEBI:456215"/>
        <dbReference type="EC" id="6.1.1.20"/>
    </reaction>
</comment>
<comment type="cofactor">
    <cofactor evidence="1">
        <name>Mg(2+)</name>
        <dbReference type="ChEBI" id="CHEBI:18420"/>
    </cofactor>
    <text evidence="1">Binds 2 magnesium ions per tetramer.</text>
</comment>
<comment type="subunit">
    <text evidence="1">Tetramer of two alpha and two beta subunits.</text>
</comment>
<comment type="subcellular location">
    <subcellularLocation>
        <location evidence="1">Cytoplasm</location>
    </subcellularLocation>
</comment>
<comment type="similarity">
    <text evidence="1">Belongs to the phenylalanyl-tRNA synthetase beta subunit family. Type 1 subfamily.</text>
</comment>
<comment type="caution">
    <text evidence="2">Lacks the conserved glutamate residue in position 469 that binds magnesium; it is replaced by a serine residue.</text>
</comment>
<reference key="1">
    <citation type="journal article" date="2002" name="Nat. Genet.">
        <title>Genome sequence of the endocellular obligate symbiont of tsetse flies, Wigglesworthia glossinidia.</title>
        <authorList>
            <person name="Akman L."/>
            <person name="Yamashita A."/>
            <person name="Watanabe H."/>
            <person name="Oshima K."/>
            <person name="Shiba T."/>
            <person name="Hattori M."/>
            <person name="Aksoy S."/>
        </authorList>
    </citation>
    <scope>NUCLEOTIDE SEQUENCE [LARGE SCALE GENOMIC DNA]</scope>
</reference>
<protein>
    <recommendedName>
        <fullName evidence="1">Phenylalanine--tRNA ligase beta subunit</fullName>
        <ecNumber evidence="1">6.1.1.20</ecNumber>
    </recommendedName>
    <alternativeName>
        <fullName evidence="1">Phenylalanyl-tRNA synthetase beta subunit</fullName>
        <shortName evidence="1">PheRS</shortName>
    </alternativeName>
</protein>
<dbReference type="EC" id="6.1.1.20" evidence="1"/>
<dbReference type="EMBL" id="BA000021">
    <property type="protein sequence ID" value="BAC24232.1"/>
    <property type="molecule type" value="Genomic_DNA"/>
</dbReference>
<dbReference type="SMR" id="Q8D3B5"/>
<dbReference type="STRING" id="36870.gene:10368564"/>
<dbReference type="KEGG" id="wbr:pheT"/>
<dbReference type="eggNOG" id="COG0072">
    <property type="taxonomic scope" value="Bacteria"/>
</dbReference>
<dbReference type="HOGENOM" id="CLU_016891_0_0_6"/>
<dbReference type="OrthoDB" id="9805455at2"/>
<dbReference type="Proteomes" id="UP000000562">
    <property type="component" value="Chromosome"/>
</dbReference>
<dbReference type="GO" id="GO:0009328">
    <property type="term" value="C:phenylalanine-tRNA ligase complex"/>
    <property type="evidence" value="ECO:0007669"/>
    <property type="project" value="TreeGrafter"/>
</dbReference>
<dbReference type="GO" id="GO:0005524">
    <property type="term" value="F:ATP binding"/>
    <property type="evidence" value="ECO:0007669"/>
    <property type="project" value="UniProtKB-UniRule"/>
</dbReference>
<dbReference type="GO" id="GO:0000287">
    <property type="term" value="F:magnesium ion binding"/>
    <property type="evidence" value="ECO:0007669"/>
    <property type="project" value="UniProtKB-UniRule"/>
</dbReference>
<dbReference type="GO" id="GO:0004826">
    <property type="term" value="F:phenylalanine-tRNA ligase activity"/>
    <property type="evidence" value="ECO:0007669"/>
    <property type="project" value="UniProtKB-UniRule"/>
</dbReference>
<dbReference type="GO" id="GO:0000049">
    <property type="term" value="F:tRNA binding"/>
    <property type="evidence" value="ECO:0007669"/>
    <property type="project" value="UniProtKB-KW"/>
</dbReference>
<dbReference type="GO" id="GO:0006432">
    <property type="term" value="P:phenylalanyl-tRNA aminoacylation"/>
    <property type="evidence" value="ECO:0007669"/>
    <property type="project" value="UniProtKB-UniRule"/>
</dbReference>
<dbReference type="CDD" id="cd00769">
    <property type="entry name" value="PheRS_beta_core"/>
    <property type="match status" value="1"/>
</dbReference>
<dbReference type="CDD" id="cd02796">
    <property type="entry name" value="tRNA_bind_bactPheRS"/>
    <property type="match status" value="1"/>
</dbReference>
<dbReference type="FunFam" id="3.30.930.10:FF:000022">
    <property type="entry name" value="Phenylalanine--tRNA ligase beta subunit"/>
    <property type="match status" value="1"/>
</dbReference>
<dbReference type="Gene3D" id="3.30.56.10">
    <property type="match status" value="2"/>
</dbReference>
<dbReference type="Gene3D" id="3.30.930.10">
    <property type="entry name" value="Bira Bifunctional Protein, Domain 2"/>
    <property type="match status" value="1"/>
</dbReference>
<dbReference type="Gene3D" id="3.30.70.380">
    <property type="entry name" value="Ferrodoxin-fold anticodon-binding domain"/>
    <property type="match status" value="1"/>
</dbReference>
<dbReference type="Gene3D" id="2.40.50.140">
    <property type="entry name" value="Nucleic acid-binding proteins"/>
    <property type="match status" value="1"/>
</dbReference>
<dbReference type="Gene3D" id="3.50.40.10">
    <property type="entry name" value="Phenylalanyl-trna Synthetase, Chain B, domain 3"/>
    <property type="match status" value="1"/>
</dbReference>
<dbReference type="HAMAP" id="MF_00283">
    <property type="entry name" value="Phe_tRNA_synth_beta1"/>
    <property type="match status" value="1"/>
</dbReference>
<dbReference type="InterPro" id="IPR045864">
    <property type="entry name" value="aa-tRNA-synth_II/BPL/LPL"/>
</dbReference>
<dbReference type="InterPro" id="IPR005146">
    <property type="entry name" value="B3/B4_tRNA-bd"/>
</dbReference>
<dbReference type="InterPro" id="IPR009061">
    <property type="entry name" value="DNA-bd_dom_put_sf"/>
</dbReference>
<dbReference type="InterPro" id="IPR005121">
    <property type="entry name" value="Fdx_antiC-bd"/>
</dbReference>
<dbReference type="InterPro" id="IPR036690">
    <property type="entry name" value="Fdx_antiC-bd_sf"/>
</dbReference>
<dbReference type="InterPro" id="IPR012340">
    <property type="entry name" value="NA-bd_OB-fold"/>
</dbReference>
<dbReference type="InterPro" id="IPR045060">
    <property type="entry name" value="Phe-tRNA-ligase_IIc_bsu"/>
</dbReference>
<dbReference type="InterPro" id="IPR004532">
    <property type="entry name" value="Phe-tRNA-ligase_IIc_bsu_bact"/>
</dbReference>
<dbReference type="InterPro" id="IPR020825">
    <property type="entry name" value="Phe-tRNA_synthase-like_B3/B4"/>
</dbReference>
<dbReference type="InterPro" id="IPR041616">
    <property type="entry name" value="PheRS_beta_core"/>
</dbReference>
<dbReference type="InterPro" id="IPR002547">
    <property type="entry name" value="tRNA-bd_dom"/>
</dbReference>
<dbReference type="InterPro" id="IPR033714">
    <property type="entry name" value="tRNA_bind_bactPheRS"/>
</dbReference>
<dbReference type="InterPro" id="IPR005147">
    <property type="entry name" value="tRNA_synthase_B5-dom"/>
</dbReference>
<dbReference type="NCBIfam" id="TIGR00472">
    <property type="entry name" value="pheT_bact"/>
    <property type="match status" value="1"/>
</dbReference>
<dbReference type="PANTHER" id="PTHR10947:SF0">
    <property type="entry name" value="PHENYLALANINE--TRNA LIGASE BETA SUBUNIT"/>
    <property type="match status" value="1"/>
</dbReference>
<dbReference type="PANTHER" id="PTHR10947">
    <property type="entry name" value="PHENYLALANYL-TRNA SYNTHETASE BETA CHAIN AND LEUCINE-RICH REPEAT-CONTAINING PROTEIN 47"/>
    <property type="match status" value="1"/>
</dbReference>
<dbReference type="Pfam" id="PF03483">
    <property type="entry name" value="B3_4"/>
    <property type="match status" value="1"/>
</dbReference>
<dbReference type="Pfam" id="PF03484">
    <property type="entry name" value="B5"/>
    <property type="match status" value="1"/>
</dbReference>
<dbReference type="Pfam" id="PF03147">
    <property type="entry name" value="FDX-ACB"/>
    <property type="match status" value="1"/>
</dbReference>
<dbReference type="Pfam" id="PF01588">
    <property type="entry name" value="tRNA_bind"/>
    <property type="match status" value="1"/>
</dbReference>
<dbReference type="Pfam" id="PF17759">
    <property type="entry name" value="tRNA_synthFbeta"/>
    <property type="match status" value="1"/>
</dbReference>
<dbReference type="SMART" id="SM00873">
    <property type="entry name" value="B3_4"/>
    <property type="match status" value="1"/>
</dbReference>
<dbReference type="SMART" id="SM00874">
    <property type="entry name" value="B5"/>
    <property type="match status" value="1"/>
</dbReference>
<dbReference type="SMART" id="SM00896">
    <property type="entry name" value="FDX-ACB"/>
    <property type="match status" value="1"/>
</dbReference>
<dbReference type="SUPFAM" id="SSF54991">
    <property type="entry name" value="Anticodon-binding domain of PheRS"/>
    <property type="match status" value="1"/>
</dbReference>
<dbReference type="SUPFAM" id="SSF55681">
    <property type="entry name" value="Class II aaRS and biotin synthetases"/>
    <property type="match status" value="1"/>
</dbReference>
<dbReference type="SUPFAM" id="SSF50249">
    <property type="entry name" value="Nucleic acid-binding proteins"/>
    <property type="match status" value="1"/>
</dbReference>
<dbReference type="SUPFAM" id="SSF56037">
    <property type="entry name" value="PheT/TilS domain"/>
    <property type="match status" value="1"/>
</dbReference>
<dbReference type="SUPFAM" id="SSF46955">
    <property type="entry name" value="Putative DNA-binding domain"/>
    <property type="match status" value="1"/>
</dbReference>
<dbReference type="PROSITE" id="PS51483">
    <property type="entry name" value="B5"/>
    <property type="match status" value="1"/>
</dbReference>
<dbReference type="PROSITE" id="PS51447">
    <property type="entry name" value="FDX_ACB"/>
    <property type="match status" value="1"/>
</dbReference>
<dbReference type="PROSITE" id="PS50886">
    <property type="entry name" value="TRBD"/>
    <property type="match status" value="1"/>
</dbReference>
<proteinExistence type="inferred from homology"/>